<dbReference type="EC" id="2.7.7.6" evidence="1"/>
<dbReference type="EMBL" id="CP000826">
    <property type="protein sequence ID" value="ABV39388.1"/>
    <property type="molecule type" value="Genomic_DNA"/>
</dbReference>
<dbReference type="SMR" id="A8G8E8"/>
<dbReference type="STRING" id="399741.Spro_0278"/>
<dbReference type="KEGG" id="spe:Spro_0278"/>
<dbReference type="eggNOG" id="COG0086">
    <property type="taxonomic scope" value="Bacteria"/>
</dbReference>
<dbReference type="HOGENOM" id="CLU_000524_3_1_6"/>
<dbReference type="OrthoDB" id="9815296at2"/>
<dbReference type="GO" id="GO:0000428">
    <property type="term" value="C:DNA-directed RNA polymerase complex"/>
    <property type="evidence" value="ECO:0007669"/>
    <property type="project" value="UniProtKB-KW"/>
</dbReference>
<dbReference type="GO" id="GO:0003677">
    <property type="term" value="F:DNA binding"/>
    <property type="evidence" value="ECO:0007669"/>
    <property type="project" value="UniProtKB-UniRule"/>
</dbReference>
<dbReference type="GO" id="GO:0003899">
    <property type="term" value="F:DNA-directed RNA polymerase activity"/>
    <property type="evidence" value="ECO:0007669"/>
    <property type="project" value="UniProtKB-UniRule"/>
</dbReference>
<dbReference type="GO" id="GO:0000287">
    <property type="term" value="F:magnesium ion binding"/>
    <property type="evidence" value="ECO:0007669"/>
    <property type="project" value="UniProtKB-UniRule"/>
</dbReference>
<dbReference type="GO" id="GO:0008270">
    <property type="term" value="F:zinc ion binding"/>
    <property type="evidence" value="ECO:0007669"/>
    <property type="project" value="UniProtKB-UniRule"/>
</dbReference>
<dbReference type="GO" id="GO:0006351">
    <property type="term" value="P:DNA-templated transcription"/>
    <property type="evidence" value="ECO:0007669"/>
    <property type="project" value="UniProtKB-UniRule"/>
</dbReference>
<dbReference type="CDD" id="cd02655">
    <property type="entry name" value="RNAP_beta'_C"/>
    <property type="match status" value="1"/>
</dbReference>
<dbReference type="CDD" id="cd01609">
    <property type="entry name" value="RNAP_beta'_N"/>
    <property type="match status" value="1"/>
</dbReference>
<dbReference type="FunFam" id="1.10.132.30:FF:000003">
    <property type="entry name" value="DNA-directed RNA polymerase subunit beta"/>
    <property type="match status" value="1"/>
</dbReference>
<dbReference type="FunFam" id="1.10.150.390:FF:000002">
    <property type="entry name" value="DNA-directed RNA polymerase subunit beta"/>
    <property type="match status" value="1"/>
</dbReference>
<dbReference type="FunFam" id="1.10.274.100:FF:000002">
    <property type="entry name" value="DNA-directed RNA polymerase subunit beta"/>
    <property type="match status" value="1"/>
</dbReference>
<dbReference type="FunFam" id="1.10.40.90:FF:000001">
    <property type="entry name" value="DNA-directed RNA polymerase subunit beta"/>
    <property type="match status" value="1"/>
</dbReference>
<dbReference type="FunFam" id="2.40.50.100:FF:000012">
    <property type="entry name" value="DNA-directed RNA polymerase subunit beta"/>
    <property type="match status" value="1"/>
</dbReference>
<dbReference type="FunFam" id="2.40.50.100:FF:000016">
    <property type="entry name" value="DNA-directed RNA polymerase subunit beta"/>
    <property type="match status" value="1"/>
</dbReference>
<dbReference type="FunFam" id="2.40.50.100:FF:000019">
    <property type="entry name" value="DNA-directed RNA polymerase subunit beta"/>
    <property type="match status" value="1"/>
</dbReference>
<dbReference type="FunFam" id="4.10.860.120:FF:000001">
    <property type="entry name" value="DNA-directed RNA polymerase subunit beta"/>
    <property type="match status" value="1"/>
</dbReference>
<dbReference type="Gene3D" id="1.10.132.30">
    <property type="match status" value="1"/>
</dbReference>
<dbReference type="Gene3D" id="1.10.150.390">
    <property type="match status" value="1"/>
</dbReference>
<dbReference type="Gene3D" id="1.10.1790.20">
    <property type="match status" value="1"/>
</dbReference>
<dbReference type="Gene3D" id="1.10.40.90">
    <property type="match status" value="1"/>
</dbReference>
<dbReference type="Gene3D" id="2.40.40.20">
    <property type="match status" value="1"/>
</dbReference>
<dbReference type="Gene3D" id="2.40.50.100">
    <property type="match status" value="3"/>
</dbReference>
<dbReference type="Gene3D" id="4.10.860.120">
    <property type="entry name" value="RNA polymerase II, clamp domain"/>
    <property type="match status" value="1"/>
</dbReference>
<dbReference type="Gene3D" id="1.10.274.100">
    <property type="entry name" value="RNA polymerase Rpb1, domain 3"/>
    <property type="match status" value="1"/>
</dbReference>
<dbReference type="HAMAP" id="MF_01322">
    <property type="entry name" value="RNApol_bact_RpoC"/>
    <property type="match status" value="1"/>
</dbReference>
<dbReference type="InterPro" id="IPR045867">
    <property type="entry name" value="DNA-dir_RpoC_beta_prime"/>
</dbReference>
<dbReference type="InterPro" id="IPR012754">
    <property type="entry name" value="DNA-dir_RpoC_beta_prime_bact"/>
</dbReference>
<dbReference type="InterPro" id="IPR000722">
    <property type="entry name" value="RNA_pol_asu"/>
</dbReference>
<dbReference type="InterPro" id="IPR006592">
    <property type="entry name" value="RNA_pol_N"/>
</dbReference>
<dbReference type="InterPro" id="IPR007080">
    <property type="entry name" value="RNA_pol_Rpb1_1"/>
</dbReference>
<dbReference type="InterPro" id="IPR007066">
    <property type="entry name" value="RNA_pol_Rpb1_3"/>
</dbReference>
<dbReference type="InterPro" id="IPR042102">
    <property type="entry name" value="RNA_pol_Rpb1_3_sf"/>
</dbReference>
<dbReference type="InterPro" id="IPR007083">
    <property type="entry name" value="RNA_pol_Rpb1_4"/>
</dbReference>
<dbReference type="InterPro" id="IPR007081">
    <property type="entry name" value="RNA_pol_Rpb1_5"/>
</dbReference>
<dbReference type="InterPro" id="IPR044893">
    <property type="entry name" value="RNA_pol_Rpb1_clamp_domain"/>
</dbReference>
<dbReference type="InterPro" id="IPR038120">
    <property type="entry name" value="Rpb1_funnel_sf"/>
</dbReference>
<dbReference type="NCBIfam" id="TIGR02386">
    <property type="entry name" value="rpoC_TIGR"/>
    <property type="match status" value="1"/>
</dbReference>
<dbReference type="PANTHER" id="PTHR19376">
    <property type="entry name" value="DNA-DIRECTED RNA POLYMERASE"/>
    <property type="match status" value="1"/>
</dbReference>
<dbReference type="PANTHER" id="PTHR19376:SF54">
    <property type="entry name" value="DNA-DIRECTED RNA POLYMERASE SUBUNIT BETA"/>
    <property type="match status" value="1"/>
</dbReference>
<dbReference type="Pfam" id="PF04997">
    <property type="entry name" value="RNA_pol_Rpb1_1"/>
    <property type="match status" value="1"/>
</dbReference>
<dbReference type="Pfam" id="PF00623">
    <property type="entry name" value="RNA_pol_Rpb1_2"/>
    <property type="match status" value="2"/>
</dbReference>
<dbReference type="Pfam" id="PF04983">
    <property type="entry name" value="RNA_pol_Rpb1_3"/>
    <property type="match status" value="1"/>
</dbReference>
<dbReference type="Pfam" id="PF05000">
    <property type="entry name" value="RNA_pol_Rpb1_4"/>
    <property type="match status" value="1"/>
</dbReference>
<dbReference type="Pfam" id="PF04998">
    <property type="entry name" value="RNA_pol_Rpb1_5"/>
    <property type="match status" value="1"/>
</dbReference>
<dbReference type="SMART" id="SM00663">
    <property type="entry name" value="RPOLA_N"/>
    <property type="match status" value="1"/>
</dbReference>
<dbReference type="SUPFAM" id="SSF64484">
    <property type="entry name" value="beta and beta-prime subunits of DNA dependent RNA-polymerase"/>
    <property type="match status" value="1"/>
</dbReference>
<evidence type="ECO:0000255" key="1">
    <source>
        <dbReference type="HAMAP-Rule" id="MF_01322"/>
    </source>
</evidence>
<gene>
    <name evidence="1" type="primary">rpoC</name>
    <name type="ordered locus">Spro_0278</name>
</gene>
<accession>A8G8E8</accession>
<feature type="chain" id="PRO_0000353429" description="DNA-directed RNA polymerase subunit beta'">
    <location>
        <begin position="1"/>
        <end position="1408"/>
    </location>
</feature>
<feature type="binding site" evidence="1">
    <location>
        <position position="70"/>
    </location>
    <ligand>
        <name>Zn(2+)</name>
        <dbReference type="ChEBI" id="CHEBI:29105"/>
        <label>1</label>
    </ligand>
</feature>
<feature type="binding site" evidence="1">
    <location>
        <position position="72"/>
    </location>
    <ligand>
        <name>Zn(2+)</name>
        <dbReference type="ChEBI" id="CHEBI:29105"/>
        <label>1</label>
    </ligand>
</feature>
<feature type="binding site" evidence="1">
    <location>
        <position position="85"/>
    </location>
    <ligand>
        <name>Zn(2+)</name>
        <dbReference type="ChEBI" id="CHEBI:29105"/>
        <label>1</label>
    </ligand>
</feature>
<feature type="binding site" evidence="1">
    <location>
        <position position="88"/>
    </location>
    <ligand>
        <name>Zn(2+)</name>
        <dbReference type="ChEBI" id="CHEBI:29105"/>
        <label>1</label>
    </ligand>
</feature>
<feature type="binding site" evidence="1">
    <location>
        <position position="460"/>
    </location>
    <ligand>
        <name>Mg(2+)</name>
        <dbReference type="ChEBI" id="CHEBI:18420"/>
    </ligand>
</feature>
<feature type="binding site" evidence="1">
    <location>
        <position position="462"/>
    </location>
    <ligand>
        <name>Mg(2+)</name>
        <dbReference type="ChEBI" id="CHEBI:18420"/>
    </ligand>
</feature>
<feature type="binding site" evidence="1">
    <location>
        <position position="464"/>
    </location>
    <ligand>
        <name>Mg(2+)</name>
        <dbReference type="ChEBI" id="CHEBI:18420"/>
    </ligand>
</feature>
<feature type="binding site" evidence="1">
    <location>
        <position position="814"/>
    </location>
    <ligand>
        <name>Zn(2+)</name>
        <dbReference type="ChEBI" id="CHEBI:29105"/>
        <label>2</label>
    </ligand>
</feature>
<feature type="binding site" evidence="1">
    <location>
        <position position="888"/>
    </location>
    <ligand>
        <name>Zn(2+)</name>
        <dbReference type="ChEBI" id="CHEBI:29105"/>
        <label>2</label>
    </ligand>
</feature>
<feature type="binding site" evidence="1">
    <location>
        <position position="895"/>
    </location>
    <ligand>
        <name>Zn(2+)</name>
        <dbReference type="ChEBI" id="CHEBI:29105"/>
        <label>2</label>
    </ligand>
</feature>
<feature type="binding site" evidence="1">
    <location>
        <position position="898"/>
    </location>
    <ligand>
        <name>Zn(2+)</name>
        <dbReference type="ChEBI" id="CHEBI:29105"/>
        <label>2</label>
    </ligand>
</feature>
<reference key="1">
    <citation type="submission" date="2007-09" db="EMBL/GenBank/DDBJ databases">
        <title>Complete sequence of chromosome of Serratia proteamaculans 568.</title>
        <authorList>
            <consortium name="US DOE Joint Genome Institute"/>
            <person name="Copeland A."/>
            <person name="Lucas S."/>
            <person name="Lapidus A."/>
            <person name="Barry K."/>
            <person name="Glavina del Rio T."/>
            <person name="Dalin E."/>
            <person name="Tice H."/>
            <person name="Pitluck S."/>
            <person name="Chain P."/>
            <person name="Malfatti S."/>
            <person name="Shin M."/>
            <person name="Vergez L."/>
            <person name="Schmutz J."/>
            <person name="Larimer F."/>
            <person name="Land M."/>
            <person name="Hauser L."/>
            <person name="Kyrpides N."/>
            <person name="Kim E."/>
            <person name="Taghavi S."/>
            <person name="Newman L."/>
            <person name="Vangronsveld J."/>
            <person name="van der Lelie D."/>
            <person name="Richardson P."/>
        </authorList>
    </citation>
    <scope>NUCLEOTIDE SEQUENCE [LARGE SCALE GENOMIC DNA]</scope>
    <source>
        <strain>568</strain>
    </source>
</reference>
<comment type="function">
    <text evidence="1">DNA-dependent RNA polymerase catalyzes the transcription of DNA into RNA using the four ribonucleoside triphosphates as substrates.</text>
</comment>
<comment type="catalytic activity">
    <reaction evidence="1">
        <text>RNA(n) + a ribonucleoside 5'-triphosphate = RNA(n+1) + diphosphate</text>
        <dbReference type="Rhea" id="RHEA:21248"/>
        <dbReference type="Rhea" id="RHEA-COMP:14527"/>
        <dbReference type="Rhea" id="RHEA-COMP:17342"/>
        <dbReference type="ChEBI" id="CHEBI:33019"/>
        <dbReference type="ChEBI" id="CHEBI:61557"/>
        <dbReference type="ChEBI" id="CHEBI:140395"/>
        <dbReference type="EC" id="2.7.7.6"/>
    </reaction>
</comment>
<comment type="cofactor">
    <cofactor evidence="1">
        <name>Mg(2+)</name>
        <dbReference type="ChEBI" id="CHEBI:18420"/>
    </cofactor>
    <text evidence="1">Binds 1 Mg(2+) ion per subunit.</text>
</comment>
<comment type="cofactor">
    <cofactor evidence="1">
        <name>Zn(2+)</name>
        <dbReference type="ChEBI" id="CHEBI:29105"/>
    </cofactor>
    <text evidence="1">Binds 2 Zn(2+) ions per subunit.</text>
</comment>
<comment type="subunit">
    <text evidence="1">The RNAP catalytic core consists of 2 alpha, 1 beta, 1 beta' and 1 omega subunit. When a sigma factor is associated with the core the holoenzyme is formed, which can initiate transcription.</text>
</comment>
<comment type="similarity">
    <text evidence="1">Belongs to the RNA polymerase beta' chain family.</text>
</comment>
<organism>
    <name type="scientific">Serratia proteamaculans (strain 568)</name>
    <dbReference type="NCBI Taxonomy" id="399741"/>
    <lineage>
        <taxon>Bacteria</taxon>
        <taxon>Pseudomonadati</taxon>
        <taxon>Pseudomonadota</taxon>
        <taxon>Gammaproteobacteria</taxon>
        <taxon>Enterobacterales</taxon>
        <taxon>Yersiniaceae</taxon>
        <taxon>Serratia</taxon>
    </lineage>
</organism>
<sequence>MKDLLKFLKAQTKTEEFDAIKIALASPDMIRSWSFGEVKKPETINYRTFKPERDGLFCARIFGPVKDYECLCGKYKRLKHRGVICEKCGVEVTQTKVRRERMGHIELASPTAHIWFLKSLPSRIGLLLDMPLRDIERVLYFESYVVIEGGMTNLERRQILTEEQYLDALEEFGDEFDAKMGAEAIQALLKNMDLEQECETLREELNETNSETKRKKLTKRIKLLEAFVQSGNKPEWMILTVLPVLPPDLRPLVPLDGGRFATSDLNDLYRRVINRNNRLKRLLDLAAPDIIVRNEKRMLQEAVDALLDNGRRGRAITGSNKRPLKSLADMIKGKQGRFRQNLLGKRVDYSGRSVITVGPYLRLHQCGLPKKMALELFKPFIYGKLELRGLATTIKAAKKMVEREEAVVWDILDEVIREHPVLLNRAPTLHRLGIQAFEPVLIEGKAIQLHPLVCAAYNADFDGDQMAVHVPLTLEAQLEARALMMSTNNILSPANGEPIIVPSQDVVLGLYYMTRDCVNAKGEGMVLSGPKEAERIYRAGLASLHARVKVRITEEIKNTEGESVHQTSIVDTTVGRAILWMIVPRGLPYSIVNQPLGKKAISKMLNTCYRILGLKPTVIFADQIMYTGFAYAARSGASVGIDDMVIPAKKAEIIEEAETEVAEIQEQFQSGLVTAGERYNKVIDIWAAANERVAKAMMENLSVEDVVNRDGVVEQQVSFNSIFMMADSGARGSAAQIRQLAGMRGLMAKPDGSIIETPITANFREGLNVLQYFISTHGARKGLADTALKTANSGYLTRRLVDVAQDLVVTEDDCGTHNGIMMTPVIEGGDVKEPLRERVLGRVTAEDIIKPGTADILVPRNTLLHEKTCDLLEENSVDSVKVRSVVSCETDFGVCANCYGRDLARGHIINKGEAIGVIAAQSIGEPGTQLTMRTFHIGGAASRAAAESSIQVKNKGTLKLSNVKFVMNAAGKLVITSRNTELKLIDEFGRTKERYKVPYGSVMGKGDGMEVNGGETVANWDPHTMPVITEVSGFIRFADMVDGQTITRQTDELTGLSSLVVLDSAERTGSGKDLRPALKIVDAKGDDVLIPGTDMPAQYFLPGKAIVQLEDGIQIGAGDTLARIPQESGGTKDITGGLPRVADLFEARRPKEPAILAEISGIISFGKETKGKRRLVISPLDGSDAYEEMIPKWRQLNVFEGEVVERGDVVSDGPESPHDILRLRGVHAVTRYITNEVQEVYRLQGVKINDKHIEVIVRQMLRKGTIVSAGGTEFLEGEQAEVSRVKIANRQLAAEGKIEATFSRDLLGITKASLATESFISAASFQETTRVLTEAAVAGKRDELRGLKENVIVGRLIPAGTGYAYHQDRMRRKAQGETPVVPQVSAEEATANLAELLNAGNLGGGNND</sequence>
<keyword id="KW-0240">DNA-directed RNA polymerase</keyword>
<keyword id="KW-0460">Magnesium</keyword>
<keyword id="KW-0479">Metal-binding</keyword>
<keyword id="KW-0548">Nucleotidyltransferase</keyword>
<keyword id="KW-0804">Transcription</keyword>
<keyword id="KW-0808">Transferase</keyword>
<keyword id="KW-0862">Zinc</keyword>
<protein>
    <recommendedName>
        <fullName evidence="1">DNA-directed RNA polymerase subunit beta'</fullName>
        <shortName evidence="1">RNAP subunit beta'</shortName>
        <ecNumber evidence="1">2.7.7.6</ecNumber>
    </recommendedName>
    <alternativeName>
        <fullName evidence="1">RNA polymerase subunit beta'</fullName>
    </alternativeName>
    <alternativeName>
        <fullName evidence="1">Transcriptase subunit beta'</fullName>
    </alternativeName>
</protein>
<name>RPOC_SERP5</name>
<proteinExistence type="inferred from homology"/>